<gene>
    <name type="primary">Ppm1f</name>
</gene>
<sequence length="452" mass="49611">MASGAAQNSSQMACDSEIPGFLDAFLQDFPAPLSLESPLPWKVPGTVLSQEEVEAELIELALGFLGSRNAPPSFAVAVTHEAISQLLQTDLSEFKRLPEQEEEEEEEEEEKALVTLLDAKGLARSFFNCLWKVCSQWQKQVPLTAQAPQWQWLVSIHAIRNTRRKMEDRHVSLPAFNHLFGLSDSVHRAYFAVFDGHGGVDAARYASVHVHTNASHQPELRTNPAAALKEAFRLTDEMFLQKAKRERLQSGTTGVCALIAGAALHVAWLGDSQVILVQQGRVVKLMEPHKPERQDEKARIEALGGFVSLMDCWRVNGTLAVSRAIGDVFQKPYVSGEADAASRELTGSEDYLLLACDGFFDVVPHHEVTGLVHGHLLRHKGNGMRIAEELVAVARDRGSHDNITVMVVFLREPLELLEGGVQGTGDAQADVGSQDLSTGLSELEISNTSQRS</sequence>
<proteinExistence type="evidence at protein level"/>
<name>PPM1F_MOUSE</name>
<accession>Q8CGA0</accession>
<dbReference type="EC" id="3.1.3.16"/>
<dbReference type="EMBL" id="AK154192">
    <property type="protein sequence ID" value="BAE32429.1"/>
    <property type="molecule type" value="mRNA"/>
</dbReference>
<dbReference type="EMBL" id="AK164964">
    <property type="protein sequence ID" value="BAE37981.1"/>
    <property type="molecule type" value="mRNA"/>
</dbReference>
<dbReference type="EMBL" id="BC042570">
    <property type="protein sequence ID" value="AAH42570.1"/>
    <property type="molecule type" value="mRNA"/>
</dbReference>
<dbReference type="CCDS" id="CCDS27991.1"/>
<dbReference type="RefSeq" id="NP_789803.1">
    <property type="nucleotide sequence ID" value="NM_176833.4"/>
</dbReference>
<dbReference type="RefSeq" id="XP_017172613.1">
    <property type="nucleotide sequence ID" value="XM_017317124.3"/>
</dbReference>
<dbReference type="SMR" id="Q8CGA0"/>
<dbReference type="BioGRID" id="212948">
    <property type="interactions" value="3"/>
</dbReference>
<dbReference type="FunCoup" id="Q8CGA0">
    <property type="interactions" value="551"/>
</dbReference>
<dbReference type="IntAct" id="Q8CGA0">
    <property type="interactions" value="2"/>
</dbReference>
<dbReference type="MINT" id="Q8CGA0"/>
<dbReference type="STRING" id="10090.ENSMUSP00000027373"/>
<dbReference type="GlyGen" id="Q8CGA0">
    <property type="glycosylation" value="1 site, 1 O-linked glycan (1 site)"/>
</dbReference>
<dbReference type="iPTMnet" id="Q8CGA0"/>
<dbReference type="PhosphoSitePlus" id="Q8CGA0"/>
<dbReference type="SwissPalm" id="Q8CGA0"/>
<dbReference type="jPOST" id="Q8CGA0"/>
<dbReference type="PaxDb" id="10090-ENSMUSP00000027373"/>
<dbReference type="PeptideAtlas" id="Q8CGA0"/>
<dbReference type="ProteomicsDB" id="289738"/>
<dbReference type="Pumba" id="Q8CGA0"/>
<dbReference type="Antibodypedia" id="23605">
    <property type="antibodies" value="331 antibodies from 29 providers"/>
</dbReference>
<dbReference type="DNASU" id="68606"/>
<dbReference type="Ensembl" id="ENSMUST00000027373.12">
    <property type="protein sequence ID" value="ENSMUSP00000027373.10"/>
    <property type="gene ID" value="ENSMUSG00000026181.14"/>
</dbReference>
<dbReference type="GeneID" id="68606"/>
<dbReference type="KEGG" id="mmu:68606"/>
<dbReference type="UCSC" id="uc007yjo.2">
    <property type="organism name" value="mouse"/>
</dbReference>
<dbReference type="AGR" id="MGI:1918464"/>
<dbReference type="CTD" id="9647"/>
<dbReference type="MGI" id="MGI:1918464">
    <property type="gene designation" value="Ppm1f"/>
</dbReference>
<dbReference type="VEuPathDB" id="HostDB:ENSMUSG00000026181"/>
<dbReference type="eggNOG" id="KOG0698">
    <property type="taxonomic scope" value="Eukaryota"/>
</dbReference>
<dbReference type="GeneTree" id="ENSGT00940000158884"/>
<dbReference type="HOGENOM" id="CLU_013173_15_0_1"/>
<dbReference type="InParanoid" id="Q8CGA0"/>
<dbReference type="OMA" id="DEMFLFK"/>
<dbReference type="OrthoDB" id="10264738at2759"/>
<dbReference type="PhylomeDB" id="Q8CGA0"/>
<dbReference type="TreeFam" id="TF317617"/>
<dbReference type="BioGRID-ORCS" id="68606">
    <property type="hits" value="3 hits in 77 CRISPR screens"/>
</dbReference>
<dbReference type="ChiTaRS" id="Ppm1f">
    <property type="organism name" value="mouse"/>
</dbReference>
<dbReference type="PRO" id="PR:Q8CGA0"/>
<dbReference type="Proteomes" id="UP000000589">
    <property type="component" value="Chromosome 16"/>
</dbReference>
<dbReference type="RNAct" id="Q8CGA0">
    <property type="molecule type" value="protein"/>
</dbReference>
<dbReference type="Bgee" id="ENSMUSG00000026181">
    <property type="expression patterns" value="Expressed in ear vesicle and 225 other cell types or tissues"/>
</dbReference>
<dbReference type="ExpressionAtlas" id="Q8CGA0">
    <property type="expression patterns" value="baseline and differential"/>
</dbReference>
<dbReference type="GO" id="GO:0005829">
    <property type="term" value="C:cytosol"/>
    <property type="evidence" value="ECO:0000250"/>
    <property type="project" value="UniProtKB"/>
</dbReference>
<dbReference type="GO" id="GO:0048471">
    <property type="term" value="C:perinuclear region of cytoplasm"/>
    <property type="evidence" value="ECO:0007669"/>
    <property type="project" value="Ensembl"/>
</dbReference>
<dbReference type="GO" id="GO:0032991">
    <property type="term" value="C:protein-containing complex"/>
    <property type="evidence" value="ECO:0000250"/>
    <property type="project" value="UniProtKB"/>
</dbReference>
<dbReference type="GO" id="GO:0033192">
    <property type="term" value="F:calmodulin-dependent protein phosphatase activity"/>
    <property type="evidence" value="ECO:0000250"/>
    <property type="project" value="UniProtKB"/>
</dbReference>
<dbReference type="GO" id="GO:0046872">
    <property type="term" value="F:metal ion binding"/>
    <property type="evidence" value="ECO:0007669"/>
    <property type="project" value="UniProtKB-KW"/>
</dbReference>
<dbReference type="GO" id="GO:0004722">
    <property type="term" value="F:protein serine/threonine phosphatase activity"/>
    <property type="evidence" value="ECO:0000250"/>
    <property type="project" value="UniProtKB"/>
</dbReference>
<dbReference type="GO" id="GO:0008138">
    <property type="term" value="F:protein tyrosine/serine/threonine phosphatase activity"/>
    <property type="evidence" value="ECO:0007669"/>
    <property type="project" value="Ensembl"/>
</dbReference>
<dbReference type="GO" id="GO:0006915">
    <property type="term" value="P:apoptotic process"/>
    <property type="evidence" value="ECO:0007669"/>
    <property type="project" value="UniProtKB-KW"/>
</dbReference>
<dbReference type="GO" id="GO:0071466">
    <property type="term" value="P:cellular response to xenobiotic stimulus"/>
    <property type="evidence" value="ECO:0000250"/>
    <property type="project" value="UniProtKB"/>
</dbReference>
<dbReference type="GO" id="GO:0035556">
    <property type="term" value="P:intracellular signal transduction"/>
    <property type="evidence" value="ECO:0000250"/>
    <property type="project" value="UniProtKB"/>
</dbReference>
<dbReference type="GO" id="GO:2000048">
    <property type="term" value="P:negative regulation of cell-cell adhesion mediated by cadherin"/>
    <property type="evidence" value="ECO:0007669"/>
    <property type="project" value="Ensembl"/>
</dbReference>
<dbReference type="GO" id="GO:0045892">
    <property type="term" value="P:negative regulation of DNA-templated transcription"/>
    <property type="evidence" value="ECO:0000250"/>
    <property type="project" value="UniProtKB"/>
</dbReference>
<dbReference type="GO" id="GO:0051224">
    <property type="term" value="P:negative regulation of protein transport"/>
    <property type="evidence" value="ECO:0007669"/>
    <property type="project" value="Ensembl"/>
</dbReference>
<dbReference type="GO" id="GO:0010811">
    <property type="term" value="P:positive regulation of cell-substrate adhesion"/>
    <property type="evidence" value="ECO:0000250"/>
    <property type="project" value="UniProtKB"/>
</dbReference>
<dbReference type="GO" id="GO:0050921">
    <property type="term" value="P:positive regulation of chemotaxis"/>
    <property type="evidence" value="ECO:0000250"/>
    <property type="project" value="UniProtKB"/>
</dbReference>
<dbReference type="GO" id="GO:0010634">
    <property type="term" value="P:positive regulation of epithelial cell migration"/>
    <property type="evidence" value="ECO:0000250"/>
    <property type="project" value="UniProtKB"/>
</dbReference>
<dbReference type="GO" id="GO:0051894">
    <property type="term" value="P:positive regulation of focal adhesion assembly"/>
    <property type="evidence" value="ECO:0000250"/>
    <property type="project" value="UniProtKB"/>
</dbReference>
<dbReference type="GO" id="GO:0010628">
    <property type="term" value="P:positive regulation of gene expression"/>
    <property type="evidence" value="ECO:0000250"/>
    <property type="project" value="UniProtKB"/>
</dbReference>
<dbReference type="GO" id="GO:0045927">
    <property type="term" value="P:positive regulation of growth"/>
    <property type="evidence" value="ECO:0000250"/>
    <property type="project" value="UniProtKB"/>
</dbReference>
<dbReference type="GO" id="GO:0051496">
    <property type="term" value="P:positive regulation of stress fiber assembly"/>
    <property type="evidence" value="ECO:0007669"/>
    <property type="project" value="Ensembl"/>
</dbReference>
<dbReference type="CDD" id="cd00143">
    <property type="entry name" value="PP2Cc"/>
    <property type="match status" value="1"/>
</dbReference>
<dbReference type="FunFam" id="3.60.40.10:FF:000032">
    <property type="entry name" value="Protein phosphatase, Mg2+/Mn2+-dependent, 1F"/>
    <property type="match status" value="1"/>
</dbReference>
<dbReference type="Gene3D" id="3.60.40.10">
    <property type="entry name" value="PPM-type phosphatase domain"/>
    <property type="match status" value="1"/>
</dbReference>
<dbReference type="InterPro" id="IPR015655">
    <property type="entry name" value="PP2C"/>
</dbReference>
<dbReference type="InterPro" id="IPR000222">
    <property type="entry name" value="PP2C_BS"/>
</dbReference>
<dbReference type="InterPro" id="IPR036457">
    <property type="entry name" value="PPM-type-like_dom_sf"/>
</dbReference>
<dbReference type="InterPro" id="IPR001932">
    <property type="entry name" value="PPM-type_phosphatase-like_dom"/>
</dbReference>
<dbReference type="PANTHER" id="PTHR13832:SF233">
    <property type="entry name" value="PROTEIN PHOSPHATASE 1F"/>
    <property type="match status" value="1"/>
</dbReference>
<dbReference type="PANTHER" id="PTHR13832">
    <property type="entry name" value="PROTEIN PHOSPHATASE 2C"/>
    <property type="match status" value="1"/>
</dbReference>
<dbReference type="Pfam" id="PF00481">
    <property type="entry name" value="PP2C"/>
    <property type="match status" value="1"/>
</dbReference>
<dbReference type="SMART" id="SM00331">
    <property type="entry name" value="PP2C_SIG"/>
    <property type="match status" value="1"/>
</dbReference>
<dbReference type="SMART" id="SM00332">
    <property type="entry name" value="PP2Cc"/>
    <property type="match status" value="1"/>
</dbReference>
<dbReference type="SUPFAM" id="SSF81606">
    <property type="entry name" value="PP2C-like"/>
    <property type="match status" value="1"/>
</dbReference>
<dbReference type="PROSITE" id="PS01032">
    <property type="entry name" value="PPM_1"/>
    <property type="match status" value="1"/>
</dbReference>
<dbReference type="PROSITE" id="PS51746">
    <property type="entry name" value="PPM_2"/>
    <property type="match status" value="1"/>
</dbReference>
<organism>
    <name type="scientific">Mus musculus</name>
    <name type="common">Mouse</name>
    <dbReference type="NCBI Taxonomy" id="10090"/>
    <lineage>
        <taxon>Eukaryota</taxon>
        <taxon>Metazoa</taxon>
        <taxon>Chordata</taxon>
        <taxon>Craniata</taxon>
        <taxon>Vertebrata</taxon>
        <taxon>Euteleostomi</taxon>
        <taxon>Mammalia</taxon>
        <taxon>Eutheria</taxon>
        <taxon>Euarchontoglires</taxon>
        <taxon>Glires</taxon>
        <taxon>Rodentia</taxon>
        <taxon>Myomorpha</taxon>
        <taxon>Muroidea</taxon>
        <taxon>Muridae</taxon>
        <taxon>Murinae</taxon>
        <taxon>Mus</taxon>
        <taxon>Mus</taxon>
    </lineage>
</organism>
<protein>
    <recommendedName>
        <fullName>Protein phosphatase 1F</fullName>
        <ecNumber>3.1.3.16</ecNumber>
    </recommendedName>
    <alternativeName>
        <fullName>Ca(2+)/calmodulin-dependent protein kinase phosphatase</fullName>
        <shortName>CaM-kinase phosphatase</shortName>
        <shortName>CaMKPase</shortName>
    </alternativeName>
</protein>
<feature type="chain" id="PRO_0000057759" description="Protein phosphatase 1F">
    <location>
        <begin position="1"/>
        <end position="452"/>
    </location>
</feature>
<feature type="domain" description="PPM-type phosphatase" evidence="3">
    <location>
        <begin position="153"/>
        <end position="410"/>
    </location>
</feature>
<feature type="binding site" evidence="1">
    <location>
        <position position="195"/>
    </location>
    <ligand>
        <name>Mn(2+)</name>
        <dbReference type="ChEBI" id="CHEBI:29035"/>
        <label>1</label>
    </ligand>
</feature>
<feature type="binding site" evidence="1">
    <location>
        <position position="195"/>
    </location>
    <ligand>
        <name>Mn(2+)</name>
        <dbReference type="ChEBI" id="CHEBI:29035"/>
        <label>2</label>
    </ligand>
</feature>
<feature type="binding site" evidence="1">
    <location>
        <position position="196"/>
    </location>
    <ligand>
        <name>Mn(2+)</name>
        <dbReference type="ChEBI" id="CHEBI:29035"/>
        <label>1</label>
    </ligand>
</feature>
<feature type="binding site" evidence="1">
    <location>
        <position position="357"/>
    </location>
    <ligand>
        <name>Mn(2+)</name>
        <dbReference type="ChEBI" id="CHEBI:29035"/>
        <label>2</label>
    </ligand>
</feature>
<feature type="binding site" evidence="1">
    <location>
        <position position="401"/>
    </location>
    <ligand>
        <name>Mn(2+)</name>
        <dbReference type="ChEBI" id="CHEBI:29035"/>
        <label>2</label>
    </ligand>
</feature>
<feature type="modified residue" description="Phosphoserine" evidence="2">
    <location>
        <position position="452"/>
    </location>
</feature>
<reference key="1">
    <citation type="journal article" date="2005" name="Science">
        <title>The transcriptional landscape of the mammalian genome.</title>
        <authorList>
            <person name="Carninci P."/>
            <person name="Kasukawa T."/>
            <person name="Katayama S."/>
            <person name="Gough J."/>
            <person name="Frith M.C."/>
            <person name="Maeda N."/>
            <person name="Oyama R."/>
            <person name="Ravasi T."/>
            <person name="Lenhard B."/>
            <person name="Wells C."/>
            <person name="Kodzius R."/>
            <person name="Shimokawa K."/>
            <person name="Bajic V.B."/>
            <person name="Brenner S.E."/>
            <person name="Batalov S."/>
            <person name="Forrest A.R."/>
            <person name="Zavolan M."/>
            <person name="Davis M.J."/>
            <person name="Wilming L.G."/>
            <person name="Aidinis V."/>
            <person name="Allen J.E."/>
            <person name="Ambesi-Impiombato A."/>
            <person name="Apweiler R."/>
            <person name="Aturaliya R.N."/>
            <person name="Bailey T.L."/>
            <person name="Bansal M."/>
            <person name="Baxter L."/>
            <person name="Beisel K.W."/>
            <person name="Bersano T."/>
            <person name="Bono H."/>
            <person name="Chalk A.M."/>
            <person name="Chiu K.P."/>
            <person name="Choudhary V."/>
            <person name="Christoffels A."/>
            <person name="Clutterbuck D.R."/>
            <person name="Crowe M.L."/>
            <person name="Dalla E."/>
            <person name="Dalrymple B.P."/>
            <person name="de Bono B."/>
            <person name="Della Gatta G."/>
            <person name="di Bernardo D."/>
            <person name="Down T."/>
            <person name="Engstrom P."/>
            <person name="Fagiolini M."/>
            <person name="Faulkner G."/>
            <person name="Fletcher C.F."/>
            <person name="Fukushima T."/>
            <person name="Furuno M."/>
            <person name="Futaki S."/>
            <person name="Gariboldi M."/>
            <person name="Georgii-Hemming P."/>
            <person name="Gingeras T.R."/>
            <person name="Gojobori T."/>
            <person name="Green R.E."/>
            <person name="Gustincich S."/>
            <person name="Harbers M."/>
            <person name="Hayashi Y."/>
            <person name="Hensch T.K."/>
            <person name="Hirokawa N."/>
            <person name="Hill D."/>
            <person name="Huminiecki L."/>
            <person name="Iacono M."/>
            <person name="Ikeo K."/>
            <person name="Iwama A."/>
            <person name="Ishikawa T."/>
            <person name="Jakt M."/>
            <person name="Kanapin A."/>
            <person name="Katoh M."/>
            <person name="Kawasawa Y."/>
            <person name="Kelso J."/>
            <person name="Kitamura H."/>
            <person name="Kitano H."/>
            <person name="Kollias G."/>
            <person name="Krishnan S.P."/>
            <person name="Kruger A."/>
            <person name="Kummerfeld S.K."/>
            <person name="Kurochkin I.V."/>
            <person name="Lareau L.F."/>
            <person name="Lazarevic D."/>
            <person name="Lipovich L."/>
            <person name="Liu J."/>
            <person name="Liuni S."/>
            <person name="McWilliam S."/>
            <person name="Madan Babu M."/>
            <person name="Madera M."/>
            <person name="Marchionni L."/>
            <person name="Matsuda H."/>
            <person name="Matsuzawa S."/>
            <person name="Miki H."/>
            <person name="Mignone F."/>
            <person name="Miyake S."/>
            <person name="Morris K."/>
            <person name="Mottagui-Tabar S."/>
            <person name="Mulder N."/>
            <person name="Nakano N."/>
            <person name="Nakauchi H."/>
            <person name="Ng P."/>
            <person name="Nilsson R."/>
            <person name="Nishiguchi S."/>
            <person name="Nishikawa S."/>
            <person name="Nori F."/>
            <person name="Ohara O."/>
            <person name="Okazaki Y."/>
            <person name="Orlando V."/>
            <person name="Pang K.C."/>
            <person name="Pavan W.J."/>
            <person name="Pavesi G."/>
            <person name="Pesole G."/>
            <person name="Petrovsky N."/>
            <person name="Piazza S."/>
            <person name="Reed J."/>
            <person name="Reid J.F."/>
            <person name="Ring B.Z."/>
            <person name="Ringwald M."/>
            <person name="Rost B."/>
            <person name="Ruan Y."/>
            <person name="Salzberg S.L."/>
            <person name="Sandelin A."/>
            <person name="Schneider C."/>
            <person name="Schoenbach C."/>
            <person name="Sekiguchi K."/>
            <person name="Semple C.A."/>
            <person name="Seno S."/>
            <person name="Sessa L."/>
            <person name="Sheng Y."/>
            <person name="Shibata Y."/>
            <person name="Shimada H."/>
            <person name="Shimada K."/>
            <person name="Silva D."/>
            <person name="Sinclair B."/>
            <person name="Sperling S."/>
            <person name="Stupka E."/>
            <person name="Sugiura K."/>
            <person name="Sultana R."/>
            <person name="Takenaka Y."/>
            <person name="Taki K."/>
            <person name="Tammoja K."/>
            <person name="Tan S.L."/>
            <person name="Tang S."/>
            <person name="Taylor M.S."/>
            <person name="Tegner J."/>
            <person name="Teichmann S.A."/>
            <person name="Ueda H.R."/>
            <person name="van Nimwegen E."/>
            <person name="Verardo R."/>
            <person name="Wei C.L."/>
            <person name="Yagi K."/>
            <person name="Yamanishi H."/>
            <person name="Zabarovsky E."/>
            <person name="Zhu S."/>
            <person name="Zimmer A."/>
            <person name="Hide W."/>
            <person name="Bult C."/>
            <person name="Grimmond S.M."/>
            <person name="Teasdale R.D."/>
            <person name="Liu E.T."/>
            <person name="Brusic V."/>
            <person name="Quackenbush J."/>
            <person name="Wahlestedt C."/>
            <person name="Mattick J.S."/>
            <person name="Hume D.A."/>
            <person name="Kai C."/>
            <person name="Sasaki D."/>
            <person name="Tomaru Y."/>
            <person name="Fukuda S."/>
            <person name="Kanamori-Katayama M."/>
            <person name="Suzuki M."/>
            <person name="Aoki J."/>
            <person name="Arakawa T."/>
            <person name="Iida J."/>
            <person name="Imamura K."/>
            <person name="Itoh M."/>
            <person name="Kato T."/>
            <person name="Kawaji H."/>
            <person name="Kawagashira N."/>
            <person name="Kawashima T."/>
            <person name="Kojima M."/>
            <person name="Kondo S."/>
            <person name="Konno H."/>
            <person name="Nakano K."/>
            <person name="Ninomiya N."/>
            <person name="Nishio T."/>
            <person name="Okada M."/>
            <person name="Plessy C."/>
            <person name="Shibata K."/>
            <person name="Shiraki T."/>
            <person name="Suzuki S."/>
            <person name="Tagami M."/>
            <person name="Waki K."/>
            <person name="Watahiki A."/>
            <person name="Okamura-Oho Y."/>
            <person name="Suzuki H."/>
            <person name="Kawai J."/>
            <person name="Hayashizaki Y."/>
        </authorList>
    </citation>
    <scope>NUCLEOTIDE SEQUENCE [LARGE SCALE MRNA]</scope>
</reference>
<reference key="2">
    <citation type="journal article" date="2004" name="Genome Res.">
        <title>The status, quality, and expansion of the NIH full-length cDNA project: the Mammalian Gene Collection (MGC).</title>
        <authorList>
            <consortium name="The MGC Project Team"/>
        </authorList>
    </citation>
    <scope>NUCLEOTIDE SEQUENCE [LARGE SCALE MRNA]</scope>
    <source>
        <strain>FVB/N</strain>
        <tissue>Kidney</tissue>
    </source>
</reference>
<reference key="3">
    <citation type="journal article" date="2010" name="Cell">
        <title>A tissue-specific atlas of mouse protein phosphorylation and expression.</title>
        <authorList>
            <person name="Huttlin E.L."/>
            <person name="Jedrychowski M.P."/>
            <person name="Elias J.E."/>
            <person name="Goswami T."/>
            <person name="Rad R."/>
            <person name="Beausoleil S.A."/>
            <person name="Villen J."/>
            <person name="Haas W."/>
            <person name="Sowa M.E."/>
            <person name="Gygi S.P."/>
        </authorList>
    </citation>
    <scope>IDENTIFICATION BY MASS SPECTROMETRY [LARGE SCALE ANALYSIS]</scope>
    <source>
        <tissue>Brain</tissue>
        <tissue>Brown adipose tissue</tissue>
        <tissue>Heart</tissue>
        <tissue>Kidney</tissue>
        <tissue>Liver</tissue>
        <tissue>Lung</tissue>
        <tissue>Pancreas</tissue>
        <tissue>Spleen</tissue>
    </source>
</reference>
<reference key="4">
    <citation type="journal article" date="2019" name="Genet. Med.">
        <title>Identification of novel loci for pediatric cholestatic liver disease defined by KIF12, PPM1F, USP53, LSR, and WDR83OS pathogenic variants.</title>
        <authorList>
            <person name="Maddirevula S."/>
            <person name="Alhebbi H."/>
            <person name="Alqahtani A."/>
            <person name="Algoufi T."/>
            <person name="Alsaif H.S."/>
            <person name="Ibrahim N."/>
            <person name="Abdulwahab F."/>
            <person name="Barr M."/>
            <person name="Alzaidan H."/>
            <person name="Almehaideb A."/>
            <person name="AlSasi O."/>
            <person name="Alhashem A."/>
            <person name="Hussaini H.A."/>
            <person name="Wali S."/>
            <person name="Alkuraya F.S."/>
        </authorList>
    </citation>
    <scope>TISSUE SPECIFICITY</scope>
</reference>
<comment type="function">
    <text evidence="1">Dephosphorylates and concomitantly deactivates CaM-kinase II activated upon autophosphorylation, and CaM-kinases IV and I activated upon phosphorylation by CaM-kinase kinase. Promotes apoptosis (By similarity).</text>
</comment>
<comment type="catalytic activity">
    <reaction>
        <text>O-phospho-L-seryl-[protein] + H2O = L-seryl-[protein] + phosphate</text>
        <dbReference type="Rhea" id="RHEA:20629"/>
        <dbReference type="Rhea" id="RHEA-COMP:9863"/>
        <dbReference type="Rhea" id="RHEA-COMP:11604"/>
        <dbReference type="ChEBI" id="CHEBI:15377"/>
        <dbReference type="ChEBI" id="CHEBI:29999"/>
        <dbReference type="ChEBI" id="CHEBI:43474"/>
        <dbReference type="ChEBI" id="CHEBI:83421"/>
        <dbReference type="EC" id="3.1.3.16"/>
    </reaction>
</comment>
<comment type="catalytic activity">
    <reaction>
        <text>O-phospho-L-threonyl-[protein] + H2O = L-threonyl-[protein] + phosphate</text>
        <dbReference type="Rhea" id="RHEA:47004"/>
        <dbReference type="Rhea" id="RHEA-COMP:11060"/>
        <dbReference type="Rhea" id="RHEA-COMP:11605"/>
        <dbReference type="ChEBI" id="CHEBI:15377"/>
        <dbReference type="ChEBI" id="CHEBI:30013"/>
        <dbReference type="ChEBI" id="CHEBI:43474"/>
        <dbReference type="ChEBI" id="CHEBI:61977"/>
        <dbReference type="EC" id="3.1.3.16"/>
    </reaction>
</comment>
<comment type="cofactor">
    <cofactor evidence="1">
        <name>Mg(2+)</name>
        <dbReference type="ChEBI" id="CHEBI:18420"/>
    </cofactor>
    <cofactor evidence="1">
        <name>Mn(2+)</name>
        <dbReference type="ChEBI" id="CHEBI:29035"/>
    </cofactor>
    <text evidence="1">Binds 2 magnesium or manganese ions per subunit.</text>
</comment>
<comment type="subunit">
    <text evidence="1">Associates with FEM1B.</text>
</comment>
<comment type="tissue specificity">
    <text evidence="4">Expressed in the liver.</text>
</comment>
<comment type="similarity">
    <text evidence="5">Belongs to the PP2C family.</text>
</comment>
<evidence type="ECO:0000250" key="1"/>
<evidence type="ECO:0000250" key="2">
    <source>
        <dbReference type="UniProtKB" id="P49593"/>
    </source>
</evidence>
<evidence type="ECO:0000255" key="3">
    <source>
        <dbReference type="PROSITE-ProRule" id="PRU01082"/>
    </source>
</evidence>
<evidence type="ECO:0000269" key="4">
    <source>
    </source>
</evidence>
<evidence type="ECO:0000305" key="5"/>
<keyword id="KW-0053">Apoptosis</keyword>
<keyword id="KW-0378">Hydrolase</keyword>
<keyword id="KW-0460">Magnesium</keyword>
<keyword id="KW-0464">Manganese</keyword>
<keyword id="KW-0479">Metal-binding</keyword>
<keyword id="KW-0597">Phosphoprotein</keyword>
<keyword id="KW-0904">Protein phosphatase</keyword>
<keyword id="KW-1185">Reference proteome</keyword>